<protein>
    <recommendedName>
        <fullName evidence="1">N-acetylneuraminate lyase</fullName>
        <shortName evidence="1">NAL</shortName>
        <shortName evidence="1">Neu5Ac lyase</shortName>
        <ecNumber evidence="1">4.1.3.3</ecNumber>
    </recommendedName>
    <alternativeName>
        <fullName evidence="1">N-acetylneuraminate pyruvate-lyase</fullName>
    </alternativeName>
    <alternativeName>
        <fullName evidence="1">N-acetylneuraminic acid aldolase</fullName>
    </alternativeName>
    <alternativeName>
        <fullName evidence="1">Sialate lyase</fullName>
    </alternativeName>
    <alternativeName>
        <fullName evidence="1">Sialic acid aldolase</fullName>
    </alternativeName>
    <alternativeName>
        <fullName evidence="1">Sialic acid lyase</fullName>
    </alternativeName>
</protein>
<feature type="chain" id="PRO_0000103226" description="N-acetylneuraminate lyase">
    <location>
        <begin position="1"/>
        <end position="293"/>
    </location>
</feature>
<feature type="active site" description="Proton donor" evidence="1">
    <location>
        <position position="137"/>
    </location>
</feature>
<feature type="active site" description="Schiff-base intermediate with substrate" evidence="1">
    <location>
        <position position="165"/>
    </location>
</feature>
<feature type="binding site" evidence="1">
    <location>
        <position position="48"/>
    </location>
    <ligand>
        <name>aceneuramate</name>
        <dbReference type="ChEBI" id="CHEBI:173083"/>
    </ligand>
</feature>
<feature type="binding site" evidence="1">
    <location>
        <position position="49"/>
    </location>
    <ligand>
        <name>aceneuramate</name>
        <dbReference type="ChEBI" id="CHEBI:173083"/>
    </ligand>
</feature>
<feature type="binding site" evidence="1">
    <location>
        <position position="167"/>
    </location>
    <ligand>
        <name>aceneuramate</name>
        <dbReference type="ChEBI" id="CHEBI:173083"/>
    </ligand>
</feature>
<feature type="binding site" evidence="1">
    <location>
        <position position="189"/>
    </location>
    <ligand>
        <name>aceneuramate</name>
        <dbReference type="ChEBI" id="CHEBI:173083"/>
    </ligand>
</feature>
<feature type="binding site" evidence="1">
    <location>
        <position position="191"/>
    </location>
    <ligand>
        <name>aceneuramate</name>
        <dbReference type="ChEBI" id="CHEBI:173083"/>
    </ligand>
</feature>
<feature type="binding site" evidence="1">
    <location>
        <position position="192"/>
    </location>
    <ligand>
        <name>aceneuramate</name>
        <dbReference type="ChEBI" id="CHEBI:173083"/>
    </ligand>
</feature>
<feature type="binding site" evidence="1">
    <location>
        <position position="208"/>
    </location>
    <ligand>
        <name>aceneuramate</name>
        <dbReference type="ChEBI" id="CHEBI:173083"/>
    </ligand>
</feature>
<comment type="function">
    <text evidence="1">Catalyzes the reversible aldol cleavage of N-acetylneuraminic acid (sialic acid; Neu5Ac) to form pyruvate and N-acetylmannosamine (ManNAc) via a Schiff base intermediate.</text>
</comment>
<comment type="catalytic activity">
    <reaction evidence="1">
        <text>aceneuramate = aldehydo-N-acetyl-D-mannosamine + pyruvate</text>
        <dbReference type="Rhea" id="RHEA:23296"/>
        <dbReference type="ChEBI" id="CHEBI:15361"/>
        <dbReference type="ChEBI" id="CHEBI:17122"/>
        <dbReference type="ChEBI" id="CHEBI:173083"/>
        <dbReference type="EC" id="4.1.3.3"/>
    </reaction>
</comment>
<comment type="pathway">
    <text evidence="1">Amino-sugar metabolism; N-acetylneuraminate degradation; D-fructose 6-phosphate from N-acetylneuraminate: step 1/5.</text>
</comment>
<comment type="subunit">
    <text evidence="1">Homotetramer.</text>
</comment>
<comment type="subcellular location">
    <subcellularLocation>
        <location evidence="1">Cytoplasm</location>
    </subcellularLocation>
</comment>
<comment type="similarity">
    <text evidence="1">Belongs to the DapA family. NanA subfamily.</text>
</comment>
<evidence type="ECO:0000255" key="1">
    <source>
        <dbReference type="HAMAP-Rule" id="MF_01237"/>
    </source>
</evidence>
<reference key="1">
    <citation type="journal article" date="2002" name="Lancet">
        <title>Genome and virulence determinants of high virulence community-acquired MRSA.</title>
        <authorList>
            <person name="Baba T."/>
            <person name="Takeuchi F."/>
            <person name="Kuroda M."/>
            <person name="Yuzawa H."/>
            <person name="Aoki K."/>
            <person name="Oguchi A."/>
            <person name="Nagai Y."/>
            <person name="Iwama N."/>
            <person name="Asano K."/>
            <person name="Naimi T."/>
            <person name="Kuroda H."/>
            <person name="Cui L."/>
            <person name="Yamamoto K."/>
            <person name="Hiramatsu K."/>
        </authorList>
    </citation>
    <scope>NUCLEOTIDE SEQUENCE [LARGE SCALE GENOMIC DNA]</scope>
    <source>
        <strain>MW2</strain>
    </source>
</reference>
<dbReference type="EC" id="4.1.3.3" evidence="1"/>
<dbReference type="EMBL" id="BA000033">
    <property type="protein sequence ID" value="BAB94157.1"/>
    <property type="molecule type" value="Genomic_DNA"/>
</dbReference>
<dbReference type="RefSeq" id="WP_001030738.1">
    <property type="nucleotide sequence ID" value="NC_003923.1"/>
</dbReference>
<dbReference type="SMR" id="Q8NYC7"/>
<dbReference type="KEGG" id="sam:MW0292"/>
<dbReference type="HOGENOM" id="CLU_049343_5_1_9"/>
<dbReference type="UniPathway" id="UPA00629">
    <property type="reaction ID" value="UER00680"/>
</dbReference>
<dbReference type="GO" id="GO:0005829">
    <property type="term" value="C:cytosol"/>
    <property type="evidence" value="ECO:0007669"/>
    <property type="project" value="TreeGrafter"/>
</dbReference>
<dbReference type="GO" id="GO:0008747">
    <property type="term" value="F:N-acetylneuraminate lyase activity"/>
    <property type="evidence" value="ECO:0007669"/>
    <property type="project" value="UniProtKB-UniRule"/>
</dbReference>
<dbReference type="GO" id="GO:0005975">
    <property type="term" value="P:carbohydrate metabolic process"/>
    <property type="evidence" value="ECO:0007669"/>
    <property type="project" value="UniProtKB-UniRule"/>
</dbReference>
<dbReference type="GO" id="GO:0019262">
    <property type="term" value="P:N-acetylneuraminate catabolic process"/>
    <property type="evidence" value="ECO:0007669"/>
    <property type="project" value="UniProtKB-UniRule"/>
</dbReference>
<dbReference type="CDD" id="cd00954">
    <property type="entry name" value="NAL"/>
    <property type="match status" value="1"/>
</dbReference>
<dbReference type="FunFam" id="3.20.20.70:FF:000039">
    <property type="entry name" value="N-acetylneuraminate lyase"/>
    <property type="match status" value="1"/>
</dbReference>
<dbReference type="Gene3D" id="3.20.20.70">
    <property type="entry name" value="Aldolase class I"/>
    <property type="match status" value="1"/>
</dbReference>
<dbReference type="HAMAP" id="MF_01237">
    <property type="entry name" value="N_acetylneuram_lyase"/>
    <property type="match status" value="1"/>
</dbReference>
<dbReference type="InterPro" id="IPR013785">
    <property type="entry name" value="Aldolase_TIM"/>
</dbReference>
<dbReference type="InterPro" id="IPR002220">
    <property type="entry name" value="DapA-like"/>
</dbReference>
<dbReference type="InterPro" id="IPR005264">
    <property type="entry name" value="NanA"/>
</dbReference>
<dbReference type="InterPro" id="IPR020625">
    <property type="entry name" value="Schiff_base-form_aldolases_AS"/>
</dbReference>
<dbReference type="NCBIfam" id="NF003164">
    <property type="entry name" value="PRK04147.1"/>
    <property type="match status" value="1"/>
</dbReference>
<dbReference type="PANTHER" id="PTHR42849">
    <property type="entry name" value="N-ACETYLNEURAMINATE LYASE"/>
    <property type="match status" value="1"/>
</dbReference>
<dbReference type="PANTHER" id="PTHR42849:SF1">
    <property type="entry name" value="N-ACETYLNEURAMINATE LYASE"/>
    <property type="match status" value="1"/>
</dbReference>
<dbReference type="Pfam" id="PF00701">
    <property type="entry name" value="DHDPS"/>
    <property type="match status" value="1"/>
</dbReference>
<dbReference type="PIRSF" id="PIRSF001365">
    <property type="entry name" value="DHDPS"/>
    <property type="match status" value="1"/>
</dbReference>
<dbReference type="PRINTS" id="PR00146">
    <property type="entry name" value="DHPICSNTHASE"/>
</dbReference>
<dbReference type="SMART" id="SM01130">
    <property type="entry name" value="DHDPS"/>
    <property type="match status" value="1"/>
</dbReference>
<dbReference type="SUPFAM" id="SSF51569">
    <property type="entry name" value="Aldolase"/>
    <property type="match status" value="1"/>
</dbReference>
<dbReference type="PROSITE" id="PS00666">
    <property type="entry name" value="DHDPS_2"/>
    <property type="match status" value="1"/>
</dbReference>
<sequence length="293" mass="33043">MNKDLKGLYAALLVPFDENGQVNEQGLKQIAQNAIETEELDGLYVNGSSGENFLLNTEQKKQVFKVAKEAVGDKVKLIAQVGSLDLNEAIELGKYATELGYDALSAVTPFYYPFTFEEIRDYYFDIIEATQNNMIIYAIPDLTGVNISIEQFSELFNHEKIVGVKYTAPNFFLLERIRKAFPDKLILSGFDEMLVQATISGVDGAIGSTYNVNGRRARKIFDLARQGQIQEAYQLQHDSNDIIETVLSMGIYPTLKEILRHRGIDAGLPKRPFKPFNEAHRQTLDQLIAKYDL</sequence>
<name>NANA_STAAW</name>
<accession>Q8NYC7</accession>
<proteinExistence type="inferred from homology"/>
<gene>
    <name evidence="1" type="primary">nanA</name>
    <name type="ordered locus">MW0292</name>
</gene>
<keyword id="KW-0119">Carbohydrate metabolism</keyword>
<keyword id="KW-0963">Cytoplasm</keyword>
<keyword id="KW-0456">Lyase</keyword>
<keyword id="KW-0704">Schiff base</keyword>
<organism>
    <name type="scientific">Staphylococcus aureus (strain MW2)</name>
    <dbReference type="NCBI Taxonomy" id="196620"/>
    <lineage>
        <taxon>Bacteria</taxon>
        <taxon>Bacillati</taxon>
        <taxon>Bacillota</taxon>
        <taxon>Bacilli</taxon>
        <taxon>Bacillales</taxon>
        <taxon>Staphylococcaceae</taxon>
        <taxon>Staphylococcus</taxon>
    </lineage>
</organism>